<comment type="function">
    <text evidence="1">Single strand-specific metallo-endoribonuclease involved in late-stage 70S ribosome quality control and in maturation of the 3' terminus of the 16S rRNA.</text>
</comment>
<comment type="cofactor">
    <cofactor evidence="1">
        <name>Zn(2+)</name>
        <dbReference type="ChEBI" id="CHEBI:29105"/>
    </cofactor>
    <text evidence="1">Binds 1 zinc ion.</text>
</comment>
<comment type="subcellular location">
    <subcellularLocation>
        <location evidence="1">Cytoplasm</location>
    </subcellularLocation>
</comment>
<comment type="similarity">
    <text evidence="1">Belongs to the endoribonuclease YbeY family.</text>
</comment>
<feature type="chain" id="PRO_1000089171" description="Endoribonuclease YbeY">
    <location>
        <begin position="1"/>
        <end position="152"/>
    </location>
</feature>
<feature type="binding site" evidence="1">
    <location>
        <position position="113"/>
    </location>
    <ligand>
        <name>Zn(2+)</name>
        <dbReference type="ChEBI" id="CHEBI:29105"/>
        <note>catalytic</note>
    </ligand>
</feature>
<feature type="binding site" evidence="1">
    <location>
        <position position="117"/>
    </location>
    <ligand>
        <name>Zn(2+)</name>
        <dbReference type="ChEBI" id="CHEBI:29105"/>
        <note>catalytic</note>
    </ligand>
</feature>
<feature type="binding site" evidence="1">
    <location>
        <position position="123"/>
    </location>
    <ligand>
        <name>Zn(2+)</name>
        <dbReference type="ChEBI" id="CHEBI:29105"/>
        <note>catalytic</note>
    </ligand>
</feature>
<sequence length="152" mass="17513">MSLNQLQLSLQFARFAEAPVHRAVLSRSKVTRWIRHALAVDAEITVRIVDAEEGQQLNREYRQKDYATNVLTFDYQQEPTAMADLVLCAPVVEREAREQNKTLEEHYAHLLVHGTLHAQGWDHETSEQDAEEMEAYETEIMVELGFADPYAK</sequence>
<organism>
    <name type="scientific">Delftia acidovorans (strain DSM 14801 / SPH-1)</name>
    <dbReference type="NCBI Taxonomy" id="398578"/>
    <lineage>
        <taxon>Bacteria</taxon>
        <taxon>Pseudomonadati</taxon>
        <taxon>Pseudomonadota</taxon>
        <taxon>Betaproteobacteria</taxon>
        <taxon>Burkholderiales</taxon>
        <taxon>Comamonadaceae</taxon>
        <taxon>Delftia</taxon>
    </lineage>
</organism>
<name>YBEY_DELAS</name>
<accession>A9BUG5</accession>
<gene>
    <name evidence="1" type="primary">ybeY</name>
    <name type="ordered locus">Daci_1224</name>
</gene>
<keyword id="KW-0963">Cytoplasm</keyword>
<keyword id="KW-0255">Endonuclease</keyword>
<keyword id="KW-0378">Hydrolase</keyword>
<keyword id="KW-0479">Metal-binding</keyword>
<keyword id="KW-0540">Nuclease</keyword>
<keyword id="KW-1185">Reference proteome</keyword>
<keyword id="KW-0690">Ribosome biogenesis</keyword>
<keyword id="KW-0698">rRNA processing</keyword>
<keyword id="KW-0862">Zinc</keyword>
<evidence type="ECO:0000255" key="1">
    <source>
        <dbReference type="HAMAP-Rule" id="MF_00009"/>
    </source>
</evidence>
<dbReference type="EC" id="3.1.-.-" evidence="1"/>
<dbReference type="EMBL" id="CP000884">
    <property type="protein sequence ID" value="ABX33868.1"/>
    <property type="molecule type" value="Genomic_DNA"/>
</dbReference>
<dbReference type="RefSeq" id="WP_012203154.1">
    <property type="nucleotide sequence ID" value="NC_010002.1"/>
</dbReference>
<dbReference type="SMR" id="A9BUG5"/>
<dbReference type="STRING" id="398578.Daci_1224"/>
<dbReference type="GeneID" id="24119561"/>
<dbReference type="KEGG" id="dac:Daci_1224"/>
<dbReference type="eggNOG" id="COG0319">
    <property type="taxonomic scope" value="Bacteria"/>
</dbReference>
<dbReference type="HOGENOM" id="CLU_106710_0_1_4"/>
<dbReference type="Proteomes" id="UP000000784">
    <property type="component" value="Chromosome"/>
</dbReference>
<dbReference type="GO" id="GO:0005737">
    <property type="term" value="C:cytoplasm"/>
    <property type="evidence" value="ECO:0007669"/>
    <property type="project" value="UniProtKB-SubCell"/>
</dbReference>
<dbReference type="GO" id="GO:0004222">
    <property type="term" value="F:metalloendopeptidase activity"/>
    <property type="evidence" value="ECO:0007669"/>
    <property type="project" value="InterPro"/>
</dbReference>
<dbReference type="GO" id="GO:0004521">
    <property type="term" value="F:RNA endonuclease activity"/>
    <property type="evidence" value="ECO:0007669"/>
    <property type="project" value="UniProtKB-UniRule"/>
</dbReference>
<dbReference type="GO" id="GO:0008270">
    <property type="term" value="F:zinc ion binding"/>
    <property type="evidence" value="ECO:0007669"/>
    <property type="project" value="UniProtKB-UniRule"/>
</dbReference>
<dbReference type="GO" id="GO:0006364">
    <property type="term" value="P:rRNA processing"/>
    <property type="evidence" value="ECO:0007669"/>
    <property type="project" value="UniProtKB-UniRule"/>
</dbReference>
<dbReference type="Gene3D" id="3.40.390.30">
    <property type="entry name" value="Metalloproteases ('zincins'), catalytic domain"/>
    <property type="match status" value="1"/>
</dbReference>
<dbReference type="HAMAP" id="MF_00009">
    <property type="entry name" value="Endoribonucl_YbeY"/>
    <property type="match status" value="1"/>
</dbReference>
<dbReference type="InterPro" id="IPR023091">
    <property type="entry name" value="MetalPrtase_cat_dom_sf_prd"/>
</dbReference>
<dbReference type="InterPro" id="IPR002036">
    <property type="entry name" value="YbeY"/>
</dbReference>
<dbReference type="InterPro" id="IPR020549">
    <property type="entry name" value="YbeY_CS"/>
</dbReference>
<dbReference type="NCBIfam" id="TIGR00043">
    <property type="entry name" value="rRNA maturation RNase YbeY"/>
    <property type="match status" value="1"/>
</dbReference>
<dbReference type="PANTHER" id="PTHR46986">
    <property type="entry name" value="ENDORIBONUCLEASE YBEY, CHLOROPLASTIC"/>
    <property type="match status" value="1"/>
</dbReference>
<dbReference type="PANTHER" id="PTHR46986:SF1">
    <property type="entry name" value="ENDORIBONUCLEASE YBEY, CHLOROPLASTIC"/>
    <property type="match status" value="1"/>
</dbReference>
<dbReference type="Pfam" id="PF02130">
    <property type="entry name" value="YbeY"/>
    <property type="match status" value="1"/>
</dbReference>
<dbReference type="SUPFAM" id="SSF55486">
    <property type="entry name" value="Metalloproteases ('zincins'), catalytic domain"/>
    <property type="match status" value="1"/>
</dbReference>
<dbReference type="PROSITE" id="PS01306">
    <property type="entry name" value="UPF0054"/>
    <property type="match status" value="1"/>
</dbReference>
<proteinExistence type="inferred from homology"/>
<protein>
    <recommendedName>
        <fullName evidence="1">Endoribonuclease YbeY</fullName>
        <ecNumber evidence="1">3.1.-.-</ecNumber>
    </recommendedName>
</protein>
<reference key="1">
    <citation type="submission" date="2007-11" db="EMBL/GenBank/DDBJ databases">
        <title>Complete sequence of Delftia acidovorans DSM 14801 / SPH-1.</title>
        <authorList>
            <person name="Copeland A."/>
            <person name="Lucas S."/>
            <person name="Lapidus A."/>
            <person name="Barry K."/>
            <person name="Glavina del Rio T."/>
            <person name="Dalin E."/>
            <person name="Tice H."/>
            <person name="Pitluck S."/>
            <person name="Lowry S."/>
            <person name="Clum A."/>
            <person name="Schmutz J."/>
            <person name="Larimer F."/>
            <person name="Land M."/>
            <person name="Hauser L."/>
            <person name="Kyrpides N."/>
            <person name="Kim E."/>
            <person name="Schleheck D."/>
            <person name="Richardson P."/>
        </authorList>
    </citation>
    <scope>NUCLEOTIDE SEQUENCE [LARGE SCALE GENOMIC DNA]</scope>
    <source>
        <strain>DSM 14801 / SPH-1</strain>
    </source>
</reference>